<reference key="1">
    <citation type="journal article" date="2001" name="Mol. Cell. Biol.">
        <title>The TFIID components human TAFII140 and Drosophila BIP2 (TAFII155) are novel metazoan homologues of yeast TAFII47 containing a histone fold and a PHD finger.</title>
        <authorList>
            <person name="Gangloff Y.G."/>
            <person name="Pointud J.-C."/>
            <person name="Thuault S."/>
            <person name="Carre L."/>
            <person name="Romier C."/>
            <person name="Muratoglu S."/>
            <person name="Brand M."/>
            <person name="Tora L."/>
            <person name="Couderc J.-L."/>
            <person name="Davidson I."/>
        </authorList>
    </citation>
    <scope>NUCLEOTIDE SEQUENCE [MRNA]</scope>
    <scope>SUBCELLULAR LOCATION</scope>
    <scope>INTERACTION WITH TAF10; TAF13; TBP; SAP130 AND GCN5L2</scope>
    <scope>MUTAGENESIS OF TRP-23</scope>
    <source>
        <tissue>Cervix carcinoma</tissue>
    </source>
</reference>
<reference key="2">
    <citation type="journal article" date="2004" name="Nature">
        <title>The DNA sequence and comparative analysis of human chromosome 10.</title>
        <authorList>
            <person name="Deloukas P."/>
            <person name="Earthrowl M.E."/>
            <person name="Grafham D.V."/>
            <person name="Rubenfield M."/>
            <person name="French L."/>
            <person name="Steward C.A."/>
            <person name="Sims S.K."/>
            <person name="Jones M.C."/>
            <person name="Searle S."/>
            <person name="Scott C."/>
            <person name="Howe K."/>
            <person name="Hunt S.E."/>
            <person name="Andrews T.D."/>
            <person name="Gilbert J.G.R."/>
            <person name="Swarbreck D."/>
            <person name="Ashurst J.L."/>
            <person name="Taylor A."/>
            <person name="Battles J."/>
            <person name="Bird C.P."/>
            <person name="Ainscough R."/>
            <person name="Almeida J.P."/>
            <person name="Ashwell R.I.S."/>
            <person name="Ambrose K.D."/>
            <person name="Babbage A.K."/>
            <person name="Bagguley C.L."/>
            <person name="Bailey J."/>
            <person name="Banerjee R."/>
            <person name="Bates K."/>
            <person name="Beasley H."/>
            <person name="Bray-Allen S."/>
            <person name="Brown A.J."/>
            <person name="Brown J.Y."/>
            <person name="Burford D.C."/>
            <person name="Burrill W."/>
            <person name="Burton J."/>
            <person name="Cahill P."/>
            <person name="Camire D."/>
            <person name="Carter N.P."/>
            <person name="Chapman J.C."/>
            <person name="Clark S.Y."/>
            <person name="Clarke G."/>
            <person name="Clee C.M."/>
            <person name="Clegg S."/>
            <person name="Corby N."/>
            <person name="Coulson A."/>
            <person name="Dhami P."/>
            <person name="Dutta I."/>
            <person name="Dunn M."/>
            <person name="Faulkner L."/>
            <person name="Frankish A."/>
            <person name="Frankland J.A."/>
            <person name="Garner P."/>
            <person name="Garnett J."/>
            <person name="Gribble S."/>
            <person name="Griffiths C."/>
            <person name="Grocock R."/>
            <person name="Gustafson E."/>
            <person name="Hammond S."/>
            <person name="Harley J.L."/>
            <person name="Hart E."/>
            <person name="Heath P.D."/>
            <person name="Ho T.P."/>
            <person name="Hopkins B."/>
            <person name="Horne J."/>
            <person name="Howden P.J."/>
            <person name="Huckle E."/>
            <person name="Hynds C."/>
            <person name="Johnson C."/>
            <person name="Johnson D."/>
            <person name="Kana A."/>
            <person name="Kay M."/>
            <person name="Kimberley A.M."/>
            <person name="Kershaw J.K."/>
            <person name="Kokkinaki M."/>
            <person name="Laird G.K."/>
            <person name="Lawlor S."/>
            <person name="Lee H.M."/>
            <person name="Leongamornlert D.A."/>
            <person name="Laird G."/>
            <person name="Lloyd C."/>
            <person name="Lloyd D.M."/>
            <person name="Loveland J."/>
            <person name="Lovell J."/>
            <person name="McLaren S."/>
            <person name="McLay K.E."/>
            <person name="McMurray A."/>
            <person name="Mashreghi-Mohammadi M."/>
            <person name="Matthews L."/>
            <person name="Milne S."/>
            <person name="Nickerson T."/>
            <person name="Nguyen M."/>
            <person name="Overton-Larty E."/>
            <person name="Palmer S.A."/>
            <person name="Pearce A.V."/>
            <person name="Peck A.I."/>
            <person name="Pelan S."/>
            <person name="Phillimore B."/>
            <person name="Porter K."/>
            <person name="Rice C.M."/>
            <person name="Rogosin A."/>
            <person name="Ross M.T."/>
            <person name="Sarafidou T."/>
            <person name="Sehra H.K."/>
            <person name="Shownkeen R."/>
            <person name="Skuce C.D."/>
            <person name="Smith M."/>
            <person name="Standring L."/>
            <person name="Sycamore N."/>
            <person name="Tester J."/>
            <person name="Thorpe A."/>
            <person name="Torcasso W."/>
            <person name="Tracey A."/>
            <person name="Tromans A."/>
            <person name="Tsolas J."/>
            <person name="Wall M."/>
            <person name="Walsh J."/>
            <person name="Wang H."/>
            <person name="Weinstock K."/>
            <person name="West A.P."/>
            <person name="Willey D.L."/>
            <person name="Whitehead S.L."/>
            <person name="Wilming L."/>
            <person name="Wray P.W."/>
            <person name="Young L."/>
            <person name="Chen Y."/>
            <person name="Lovering R.C."/>
            <person name="Moschonas N.K."/>
            <person name="Siebert R."/>
            <person name="Fechtel K."/>
            <person name="Bentley D."/>
            <person name="Durbin R.M."/>
            <person name="Hubbard T."/>
            <person name="Doucette-Stamm L."/>
            <person name="Beck S."/>
            <person name="Smith D.R."/>
            <person name="Rogers J."/>
        </authorList>
    </citation>
    <scope>NUCLEOTIDE SEQUENCE [LARGE SCALE GENOMIC DNA]</scope>
</reference>
<reference key="3">
    <citation type="journal article" date="2004" name="Genome Res.">
        <title>The status, quality, and expansion of the NIH full-length cDNA project: the Mammalian Gene Collection (MGC).</title>
        <authorList>
            <consortium name="The MGC Project Team"/>
        </authorList>
    </citation>
    <scope>NUCLEOTIDE SEQUENCE [LARGE SCALE MRNA] OF 1-714</scope>
    <scope>VARIANT SER-442</scope>
    <source>
        <tissue>Bone</tissue>
        <tissue>Skin</tissue>
        <tissue>Uterus</tissue>
    </source>
</reference>
<reference key="4">
    <citation type="journal article" date="2007" name="BMC Genomics">
        <title>The full-ORF clone resource of the German cDNA consortium.</title>
        <authorList>
            <person name="Bechtel S."/>
            <person name="Rosenfelder H."/>
            <person name="Duda A."/>
            <person name="Schmidt C.P."/>
            <person name="Ernst U."/>
            <person name="Wellenreuther R."/>
            <person name="Mehrle A."/>
            <person name="Schuster C."/>
            <person name="Bahr A."/>
            <person name="Bloecker H."/>
            <person name="Heubner D."/>
            <person name="Hoerlein A."/>
            <person name="Michel G."/>
            <person name="Wedler H."/>
            <person name="Koehrer K."/>
            <person name="Ottenwaelder B."/>
            <person name="Poustka A."/>
            <person name="Wiemann S."/>
            <person name="Schupp I."/>
        </authorList>
    </citation>
    <scope>NUCLEOTIDE SEQUENCE [LARGE SCALE MRNA] OF 23-703</scope>
    <scope>VARIANT ALA-696</scope>
    <source>
        <tissue>Uterus</tissue>
    </source>
</reference>
<reference key="5">
    <citation type="journal article" date="2006" name="Cell">
        <title>Global, in vivo, and site-specific phosphorylation dynamics in signaling networks.</title>
        <authorList>
            <person name="Olsen J.V."/>
            <person name="Blagoev B."/>
            <person name="Gnad F."/>
            <person name="Macek B."/>
            <person name="Kumar C."/>
            <person name="Mortensen P."/>
            <person name="Mann M."/>
        </authorList>
    </citation>
    <scope>PHOSPHORYLATION [LARGE SCALE ANALYSIS] AT SER-183</scope>
    <scope>IDENTIFICATION BY MASS SPECTROMETRY [LARGE SCALE ANALYSIS]</scope>
    <source>
        <tissue>Cervix carcinoma</tissue>
    </source>
</reference>
<reference key="6">
    <citation type="journal article" date="2009" name="Anal. Chem.">
        <title>Lys-N and trypsin cover complementary parts of the phosphoproteome in a refined SCX-based approach.</title>
        <authorList>
            <person name="Gauci S."/>
            <person name="Helbig A.O."/>
            <person name="Slijper M."/>
            <person name="Krijgsveld J."/>
            <person name="Heck A.J."/>
            <person name="Mohammed S."/>
        </authorList>
    </citation>
    <scope>IDENTIFICATION BY MASS SPECTROMETRY [LARGE SCALE ANALYSIS]</scope>
</reference>
<reference key="7">
    <citation type="journal article" date="2009" name="Sci. Signal.">
        <title>Quantitative phosphoproteomic analysis of T cell receptor signaling reveals system-wide modulation of protein-protein interactions.</title>
        <authorList>
            <person name="Mayya V."/>
            <person name="Lundgren D.H."/>
            <person name="Hwang S.-I."/>
            <person name="Rezaul K."/>
            <person name="Wu L."/>
            <person name="Eng J.K."/>
            <person name="Rodionov V."/>
            <person name="Han D.K."/>
        </authorList>
    </citation>
    <scope>PHOSPHORYLATION [LARGE SCALE ANALYSIS] AT SER-183; SER-229; SER-243; SER-297; SER-301 AND THR-501</scope>
    <scope>IDENTIFICATION BY MASS SPECTROMETRY [LARGE SCALE ANALYSIS]</scope>
    <source>
        <tissue>Leukemic T-cell</tissue>
    </source>
</reference>
<reference key="8">
    <citation type="journal article" date="2009" name="Science">
        <title>Lysine acetylation targets protein complexes and co-regulates major cellular functions.</title>
        <authorList>
            <person name="Choudhary C."/>
            <person name="Kumar C."/>
            <person name="Gnad F."/>
            <person name="Nielsen M.L."/>
            <person name="Rehman M."/>
            <person name="Walther T.C."/>
            <person name="Olsen J.V."/>
            <person name="Mann M."/>
        </authorList>
    </citation>
    <scope>ACETYLATION [LARGE SCALE ANALYSIS] AT LYS-266 AND LYS-776</scope>
    <scope>IDENTIFICATION BY MASS SPECTROMETRY [LARGE SCALE ANALYSIS]</scope>
</reference>
<reference key="9">
    <citation type="journal article" date="2010" name="Sci. Signal.">
        <title>Quantitative phosphoproteomics reveals widespread full phosphorylation site occupancy during mitosis.</title>
        <authorList>
            <person name="Olsen J.V."/>
            <person name="Vermeulen M."/>
            <person name="Santamaria A."/>
            <person name="Kumar C."/>
            <person name="Miller M.L."/>
            <person name="Jensen L.J."/>
            <person name="Gnad F."/>
            <person name="Cox J."/>
            <person name="Jensen T.S."/>
            <person name="Nigg E.A."/>
            <person name="Brunak S."/>
            <person name="Mann M."/>
        </authorList>
    </citation>
    <scope>PHOSPHORYLATION [LARGE SCALE ANALYSIS] AT SER-183</scope>
    <scope>IDENTIFICATION BY MASS SPECTROMETRY [LARGE SCALE ANALYSIS]</scope>
    <source>
        <tissue>Cervix carcinoma</tissue>
    </source>
</reference>
<reference key="10">
    <citation type="journal article" date="2013" name="J. Proteome Res.">
        <title>Toward a comprehensive characterization of a human cancer cell phosphoproteome.</title>
        <authorList>
            <person name="Zhou H."/>
            <person name="Di Palma S."/>
            <person name="Preisinger C."/>
            <person name="Peng M."/>
            <person name="Polat A.N."/>
            <person name="Heck A.J."/>
            <person name="Mohammed S."/>
        </authorList>
    </citation>
    <scope>PHOSPHORYLATION [LARGE SCALE ANALYSIS] AT SER-183; SER-199; SER-291; SER-297; SER-301; SER-667 AND SER-755</scope>
    <scope>IDENTIFICATION BY MASS SPECTROMETRY [LARGE SCALE ANALYSIS]</scope>
    <source>
        <tissue>Cervix carcinoma</tissue>
        <tissue>Erythroleukemia</tissue>
    </source>
</reference>
<reference key="11">
    <citation type="journal article" date="2014" name="J. Proteomics">
        <title>An enzyme assisted RP-RPLC approach for in-depth analysis of human liver phosphoproteome.</title>
        <authorList>
            <person name="Bian Y."/>
            <person name="Song C."/>
            <person name="Cheng K."/>
            <person name="Dong M."/>
            <person name="Wang F."/>
            <person name="Huang J."/>
            <person name="Sun D."/>
            <person name="Wang L."/>
            <person name="Ye M."/>
            <person name="Zou H."/>
        </authorList>
    </citation>
    <scope>PHOSPHORYLATION [LARGE SCALE ANALYSIS] AT SER-183 AND SER-291</scope>
    <scope>IDENTIFICATION BY MASS SPECTROMETRY [LARGE SCALE ANALYSIS]</scope>
    <source>
        <tissue>Liver</tissue>
    </source>
</reference>
<reference key="12">
    <citation type="journal article" date="2015" name="Mol. Cell. Proteomics">
        <title>System-wide analysis of SUMOylation dynamics in response to replication stress reveals novel small ubiquitin-like modified target proteins and acceptor lysines relevant for genome stability.</title>
        <authorList>
            <person name="Xiao Z."/>
            <person name="Chang J.G."/>
            <person name="Hendriks I.A."/>
            <person name="Sigurdsson J.O."/>
            <person name="Olsen J.V."/>
            <person name="Vertegaal A.C."/>
        </authorList>
    </citation>
    <scope>SUMOYLATION [LARGE SCALE ANALYSIS] AT LYS-746</scope>
    <scope>IDENTIFICATION BY MASS SPECTROMETRY [LARGE SCALE ANALYSIS]</scope>
</reference>
<reference key="13">
    <citation type="journal article" date="2017" name="Nat. Struct. Mol. Biol.">
        <title>Site-specific mapping of the human SUMO proteome reveals co-modification with phosphorylation.</title>
        <authorList>
            <person name="Hendriks I.A."/>
            <person name="Lyon D."/>
            <person name="Young C."/>
            <person name="Jensen L.J."/>
            <person name="Vertegaal A.C."/>
            <person name="Nielsen M.L."/>
        </authorList>
    </citation>
    <scope>SUMOYLATION [LARGE SCALE ANALYSIS] AT LYS-581 AND LYS-746</scope>
    <scope>IDENTIFICATION BY MASS SPECTROMETRY [LARGE SCALE ANALYSIS]</scope>
</reference>
<reference evidence="9" key="14">
    <citation type="submission" date="2015-11" db="PDB data bank">
        <title>Crystal Structure of TAF3 PHD finger bound to histone H3C4me3 peptide.</title>
        <authorList>
            <person name="Zhao S."/>
            <person name="Zhang B."/>
            <person name="Li H."/>
        </authorList>
    </citation>
    <scope>X-RAY CRYSTALLOGRAPHY (2.1 ANGSTROMS) OF 855-915</scope>
</reference>
<reference evidence="10" key="15">
    <citation type="submission" date="2017-05" db="PDB data bank">
        <title>Crystal structure of TAF3 PHD finger bound to H3K4me3Q5ser.</title>
        <authorList>
            <person name="Zhao S."/>
            <person name="Zhang B."/>
            <person name="Li H."/>
        </authorList>
    </citation>
    <scope>X-RAY CRYSTALLOGRAPHY (1.70 ANGSTROMS) OF 853-915</scope>
</reference>
<reference evidence="11 12 13 14 15 16 17 18 19 20" key="16">
    <citation type="journal article" date="2021" name="Science">
        <title>Structural insights into preinitiation complex assembly on core promoters.</title>
        <authorList>
            <person name="Chen X."/>
            <person name="Qi Y."/>
            <person name="Wu Z."/>
            <person name="Wang X."/>
            <person name="Li J."/>
            <person name="Zhao D."/>
            <person name="Hou H."/>
            <person name="Li Y."/>
            <person name="Yu Z."/>
            <person name="Liu W."/>
            <person name="Wang M."/>
            <person name="Ren Y."/>
            <person name="Li Z."/>
            <person name="Yang H."/>
            <person name="Xu Y."/>
        </authorList>
    </citation>
    <scope>STRUCTURE BY ELECTRON MICROSCOPY (3.16 ANGSTROMS)</scope>
    <scope>FUNCTION</scope>
    <scope>IDENTIFICATION IN THE TFIID COMPLEX</scope>
    <scope>SUBUNIT</scope>
</reference>
<dbReference type="EMBL" id="AJ292190">
    <property type="protein sequence ID" value="CAC34475.1"/>
    <property type="molecule type" value="mRNA"/>
</dbReference>
<dbReference type="EMBL" id="AL390294">
    <property type="status" value="NOT_ANNOTATED_CDS"/>
    <property type="molecule type" value="Genomic_DNA"/>
</dbReference>
<dbReference type="EMBL" id="AL353754">
    <property type="status" value="NOT_ANNOTATED_CDS"/>
    <property type="molecule type" value="Genomic_DNA"/>
</dbReference>
<dbReference type="EMBL" id="AL159172">
    <property type="status" value="NOT_ANNOTATED_CDS"/>
    <property type="molecule type" value="Genomic_DNA"/>
</dbReference>
<dbReference type="EMBL" id="BC017320">
    <property type="protein sequence ID" value="AAH17320.1"/>
    <property type="molecule type" value="mRNA"/>
</dbReference>
<dbReference type="EMBL" id="BC045106">
    <property type="protein sequence ID" value="AAH45106.1"/>
    <property type="status" value="ALT_SEQ"/>
    <property type="molecule type" value="mRNA"/>
</dbReference>
<dbReference type="EMBL" id="BC073884">
    <property type="protein sequence ID" value="AAH73884.1"/>
    <property type="status" value="ALT_INIT"/>
    <property type="molecule type" value="mRNA"/>
</dbReference>
<dbReference type="EMBL" id="BC062352">
    <property type="protein sequence ID" value="AAH62352.1"/>
    <property type="status" value="ALT_INIT"/>
    <property type="molecule type" value="mRNA"/>
</dbReference>
<dbReference type="EMBL" id="AL117661">
    <property type="protein sequence ID" value="CAB56032.1"/>
    <property type="molecule type" value="mRNA"/>
</dbReference>
<dbReference type="CCDS" id="CCDS41487.1"/>
<dbReference type="PIR" id="T17342">
    <property type="entry name" value="T17342"/>
</dbReference>
<dbReference type="RefSeq" id="NP_114129.1">
    <property type="nucleotide sequence ID" value="NM_031923.4"/>
</dbReference>
<dbReference type="PDB" id="5C13">
    <property type="method" value="X-ray"/>
    <property type="resolution" value="2.10 A"/>
    <property type="chains" value="A/C/E/G=855-915"/>
</dbReference>
<dbReference type="PDB" id="5WXG">
    <property type="method" value="X-ray"/>
    <property type="resolution" value="1.70 A"/>
    <property type="chains" value="A=853-915"/>
</dbReference>
<dbReference type="PDB" id="5WXH">
    <property type="method" value="X-ray"/>
    <property type="resolution" value="1.30 A"/>
    <property type="chains" value="A/C=853-915"/>
</dbReference>
<dbReference type="PDB" id="5XMY">
    <property type="method" value="X-ray"/>
    <property type="resolution" value="1.70 A"/>
    <property type="chains" value="A/C=853-915"/>
</dbReference>
<dbReference type="PDB" id="6MZD">
    <property type="method" value="EM"/>
    <property type="resolution" value="9.80 A"/>
    <property type="chains" value="C=1-929"/>
</dbReference>
<dbReference type="PDB" id="6MZL">
    <property type="method" value="EM"/>
    <property type="resolution" value="23.00 A"/>
    <property type="chains" value="C=1-929"/>
</dbReference>
<dbReference type="PDB" id="7EDX">
    <property type="method" value="EM"/>
    <property type="resolution" value="4.50 A"/>
    <property type="chains" value="c=1-929"/>
</dbReference>
<dbReference type="PDB" id="7EG7">
    <property type="method" value="EM"/>
    <property type="resolution" value="6.20 A"/>
    <property type="chains" value="c=1-929"/>
</dbReference>
<dbReference type="PDB" id="7EG8">
    <property type="method" value="EM"/>
    <property type="resolution" value="7.40 A"/>
    <property type="chains" value="c=1-929"/>
</dbReference>
<dbReference type="PDB" id="7EG9">
    <property type="method" value="EM"/>
    <property type="resolution" value="3.70 A"/>
    <property type="chains" value="c=1-929"/>
</dbReference>
<dbReference type="PDB" id="7EGA">
    <property type="method" value="EM"/>
    <property type="resolution" value="4.10 A"/>
    <property type="chains" value="c=1-929"/>
</dbReference>
<dbReference type="PDB" id="7EGB">
    <property type="method" value="EM"/>
    <property type="resolution" value="3.30 A"/>
    <property type="chains" value="c=1-929"/>
</dbReference>
<dbReference type="PDB" id="7EGC">
    <property type="method" value="EM"/>
    <property type="resolution" value="3.90 A"/>
    <property type="chains" value="c=1-929"/>
</dbReference>
<dbReference type="PDB" id="7EGD">
    <property type="method" value="EM"/>
    <property type="resolution" value="6.75 A"/>
    <property type="chains" value="c=1-929"/>
</dbReference>
<dbReference type="PDB" id="7EGE">
    <property type="method" value="EM"/>
    <property type="resolution" value="9.00 A"/>
    <property type="chains" value="c=1-929"/>
</dbReference>
<dbReference type="PDB" id="7EGF">
    <property type="method" value="EM"/>
    <property type="resolution" value="3.16 A"/>
    <property type="chains" value="c=1-929"/>
</dbReference>
<dbReference type="PDB" id="7EGI">
    <property type="method" value="EM"/>
    <property type="resolution" value="9.82 A"/>
    <property type="chains" value="c=1-929"/>
</dbReference>
<dbReference type="PDB" id="7EGJ">
    <property type="method" value="EM"/>
    <property type="resolution" value="8.64 A"/>
    <property type="chains" value="c=1-929"/>
</dbReference>
<dbReference type="PDB" id="7ENA">
    <property type="method" value="EM"/>
    <property type="resolution" value="4.07 A"/>
    <property type="chains" value="Dc=1-929"/>
</dbReference>
<dbReference type="PDB" id="7ENC">
    <property type="method" value="EM"/>
    <property type="resolution" value="4.13 A"/>
    <property type="chains" value="Dc=1-929"/>
</dbReference>
<dbReference type="PDB" id="8GXQ">
    <property type="method" value="EM"/>
    <property type="resolution" value="5.04 A"/>
    <property type="chains" value="Dc=1-929"/>
</dbReference>
<dbReference type="PDB" id="8GXS">
    <property type="method" value="EM"/>
    <property type="resolution" value="4.16 A"/>
    <property type="chains" value="Dc=1-929"/>
</dbReference>
<dbReference type="PDB" id="8WAK">
    <property type="method" value="EM"/>
    <property type="resolution" value="5.47 A"/>
    <property type="chains" value="c=1-929"/>
</dbReference>
<dbReference type="PDB" id="8WAL">
    <property type="method" value="EM"/>
    <property type="resolution" value="8.52 A"/>
    <property type="chains" value="c=1-929"/>
</dbReference>
<dbReference type="PDB" id="8WAN">
    <property type="method" value="EM"/>
    <property type="resolution" value="6.07 A"/>
    <property type="chains" value="c=1-929"/>
</dbReference>
<dbReference type="PDB" id="8WAO">
    <property type="method" value="EM"/>
    <property type="resolution" value="6.40 A"/>
    <property type="chains" value="c=1-929"/>
</dbReference>
<dbReference type="PDB" id="8WAP">
    <property type="method" value="EM"/>
    <property type="resolution" value="5.85 A"/>
    <property type="chains" value="c=1-929"/>
</dbReference>
<dbReference type="PDB" id="8WAQ">
    <property type="method" value="EM"/>
    <property type="resolution" value="6.29 A"/>
    <property type="chains" value="c=1-929"/>
</dbReference>
<dbReference type="PDB" id="8WAR">
    <property type="method" value="EM"/>
    <property type="resolution" value="7.20 A"/>
    <property type="chains" value="c=1-929"/>
</dbReference>
<dbReference type="PDB" id="8WAS">
    <property type="method" value="EM"/>
    <property type="resolution" value="6.13 A"/>
    <property type="chains" value="c=1-929"/>
</dbReference>
<dbReference type="PDBsum" id="5C13"/>
<dbReference type="PDBsum" id="5WXG"/>
<dbReference type="PDBsum" id="5WXH"/>
<dbReference type="PDBsum" id="5XMY"/>
<dbReference type="PDBsum" id="6MZD"/>
<dbReference type="PDBsum" id="6MZL"/>
<dbReference type="PDBsum" id="7EDX"/>
<dbReference type="PDBsum" id="7EG7"/>
<dbReference type="PDBsum" id="7EG8"/>
<dbReference type="PDBsum" id="7EG9"/>
<dbReference type="PDBsum" id="7EGA"/>
<dbReference type="PDBsum" id="7EGB"/>
<dbReference type="PDBsum" id="7EGC"/>
<dbReference type="PDBsum" id="7EGD"/>
<dbReference type="PDBsum" id="7EGE"/>
<dbReference type="PDBsum" id="7EGF"/>
<dbReference type="PDBsum" id="7EGI"/>
<dbReference type="PDBsum" id="7EGJ"/>
<dbReference type="PDBsum" id="7ENA"/>
<dbReference type="PDBsum" id="7ENC"/>
<dbReference type="PDBsum" id="8GXQ"/>
<dbReference type="PDBsum" id="8GXS"/>
<dbReference type="PDBsum" id="8WAK"/>
<dbReference type="PDBsum" id="8WAL"/>
<dbReference type="PDBsum" id="8WAN"/>
<dbReference type="PDBsum" id="8WAO"/>
<dbReference type="PDBsum" id="8WAP"/>
<dbReference type="PDBsum" id="8WAQ"/>
<dbReference type="PDBsum" id="8WAR"/>
<dbReference type="PDBsum" id="8WAS"/>
<dbReference type="BMRB" id="Q5VWG9"/>
<dbReference type="EMDB" id="EMD-31075"/>
<dbReference type="EMDB" id="EMD-31107"/>
<dbReference type="EMDB" id="EMD-31108"/>
<dbReference type="EMDB" id="EMD-31109"/>
<dbReference type="EMDB" id="EMD-31110"/>
<dbReference type="EMDB" id="EMD-31111"/>
<dbReference type="EMDB" id="EMD-31112"/>
<dbReference type="EMDB" id="EMD-31113"/>
<dbReference type="EMDB" id="EMD-31114"/>
<dbReference type="EMDB" id="EMD-31115"/>
<dbReference type="EMDB" id="EMD-31118"/>
<dbReference type="EMDB" id="EMD-31119"/>
<dbReference type="EMDB" id="EMD-31204"/>
<dbReference type="EMDB" id="EMD-31207"/>
<dbReference type="EMDB" id="EMD-34359"/>
<dbReference type="EMDB" id="EMD-34360"/>
<dbReference type="EMDB" id="EMD-37395"/>
<dbReference type="EMDB" id="EMD-37396"/>
<dbReference type="EMDB" id="EMD-37398"/>
<dbReference type="EMDB" id="EMD-37399"/>
<dbReference type="EMDB" id="EMD-37400"/>
<dbReference type="EMDB" id="EMD-37401"/>
<dbReference type="EMDB" id="EMD-37402"/>
<dbReference type="EMDB" id="EMD-37403"/>
<dbReference type="EMDB" id="EMD-9302"/>
<dbReference type="EMDB" id="EMD-9305"/>
<dbReference type="SMR" id="Q5VWG9"/>
<dbReference type="BioGRID" id="123775">
    <property type="interactions" value="90"/>
</dbReference>
<dbReference type="ComplexPortal" id="CPX-915">
    <property type="entry name" value="General transcription factor complex TFIID"/>
</dbReference>
<dbReference type="ComplexPortal" id="CPX-930">
    <property type="entry name" value="General transcription factor complex TFIID, TAF4B variant"/>
</dbReference>
<dbReference type="CORUM" id="Q5VWG9"/>
<dbReference type="DIP" id="DIP-38920N"/>
<dbReference type="FunCoup" id="Q5VWG9">
    <property type="interactions" value="2725"/>
</dbReference>
<dbReference type="IntAct" id="Q5VWG9">
    <property type="interactions" value="42"/>
</dbReference>
<dbReference type="MINT" id="Q5VWG9"/>
<dbReference type="STRING" id="9606.ENSP00000340271"/>
<dbReference type="ChEMBL" id="CHEMBL4523329"/>
<dbReference type="GlyGen" id="Q5VWG9">
    <property type="glycosylation" value="2 sites, 1 O-linked glycan (1 site)"/>
</dbReference>
<dbReference type="iPTMnet" id="Q5VWG9"/>
<dbReference type="MetOSite" id="Q5VWG9"/>
<dbReference type="PhosphoSitePlus" id="Q5VWG9"/>
<dbReference type="BioMuta" id="TAF3"/>
<dbReference type="DMDM" id="74747393"/>
<dbReference type="jPOST" id="Q5VWG9"/>
<dbReference type="MassIVE" id="Q5VWG9"/>
<dbReference type="PaxDb" id="9606-ENSP00000340271"/>
<dbReference type="PeptideAtlas" id="Q5VWG9"/>
<dbReference type="ProteomicsDB" id="65526"/>
<dbReference type="Pumba" id="Q5VWG9"/>
<dbReference type="Antibodypedia" id="24519">
    <property type="antibodies" value="137 antibodies from 26 providers"/>
</dbReference>
<dbReference type="DNASU" id="83860"/>
<dbReference type="Ensembl" id="ENST00000344293.6">
    <property type="protein sequence ID" value="ENSP00000340271.5"/>
    <property type="gene ID" value="ENSG00000165632.9"/>
</dbReference>
<dbReference type="GeneID" id="83860"/>
<dbReference type="KEGG" id="hsa:83860"/>
<dbReference type="MANE-Select" id="ENST00000344293.6">
    <property type="protein sequence ID" value="ENSP00000340271.5"/>
    <property type="RefSeq nucleotide sequence ID" value="NM_031923.4"/>
    <property type="RefSeq protein sequence ID" value="NP_114129.1"/>
</dbReference>
<dbReference type="UCSC" id="uc010qbd.4">
    <property type="organism name" value="human"/>
</dbReference>
<dbReference type="AGR" id="HGNC:17303"/>
<dbReference type="CTD" id="83860"/>
<dbReference type="DisGeNET" id="83860"/>
<dbReference type="GeneCards" id="TAF3"/>
<dbReference type="HGNC" id="HGNC:17303">
    <property type="gene designation" value="TAF3"/>
</dbReference>
<dbReference type="HPA" id="ENSG00000165632">
    <property type="expression patterns" value="Low tissue specificity"/>
</dbReference>
<dbReference type="MIM" id="606576">
    <property type="type" value="gene"/>
</dbReference>
<dbReference type="neXtProt" id="NX_Q5VWG9"/>
<dbReference type="OpenTargets" id="ENSG00000165632"/>
<dbReference type="PharmGKB" id="PA38222"/>
<dbReference type="VEuPathDB" id="HostDB:ENSG00000165632"/>
<dbReference type="eggNOG" id="KOG1973">
    <property type="taxonomic scope" value="Eukaryota"/>
</dbReference>
<dbReference type="eggNOG" id="KOG2389">
    <property type="taxonomic scope" value="Eukaryota"/>
</dbReference>
<dbReference type="GeneTree" id="ENSGT00710000106806"/>
<dbReference type="HOGENOM" id="CLU_014486_0_0_1"/>
<dbReference type="InParanoid" id="Q5VWG9"/>
<dbReference type="OMA" id="ENIHMRQ"/>
<dbReference type="OrthoDB" id="436852at2759"/>
<dbReference type="PAN-GO" id="Q5VWG9">
    <property type="GO annotations" value="1 GO annotation based on evolutionary models"/>
</dbReference>
<dbReference type="PhylomeDB" id="Q5VWG9"/>
<dbReference type="TreeFam" id="TF316513"/>
<dbReference type="PathwayCommons" id="Q5VWG9"/>
<dbReference type="Reactome" id="R-HSA-167161">
    <property type="pathway name" value="HIV Transcription Initiation"/>
</dbReference>
<dbReference type="Reactome" id="R-HSA-167162">
    <property type="pathway name" value="RNA Polymerase II HIV Promoter Escape"/>
</dbReference>
<dbReference type="Reactome" id="R-HSA-167172">
    <property type="pathway name" value="Transcription of the HIV genome"/>
</dbReference>
<dbReference type="Reactome" id="R-HSA-674695">
    <property type="pathway name" value="RNA Polymerase II Pre-transcription Events"/>
</dbReference>
<dbReference type="Reactome" id="R-HSA-6804756">
    <property type="pathway name" value="Regulation of TP53 Activity through Phosphorylation"/>
</dbReference>
<dbReference type="Reactome" id="R-HSA-73776">
    <property type="pathway name" value="RNA Polymerase II Promoter Escape"/>
</dbReference>
<dbReference type="Reactome" id="R-HSA-73779">
    <property type="pathway name" value="RNA Polymerase II Transcription Pre-Initiation And Promoter Opening"/>
</dbReference>
<dbReference type="Reactome" id="R-HSA-75953">
    <property type="pathway name" value="RNA Polymerase II Transcription Initiation"/>
</dbReference>
<dbReference type="Reactome" id="R-HSA-76042">
    <property type="pathway name" value="RNA Polymerase II Transcription Initiation And Promoter Clearance"/>
</dbReference>
<dbReference type="SignaLink" id="Q5VWG9"/>
<dbReference type="SIGNOR" id="Q5VWG9"/>
<dbReference type="BioGRID-ORCS" id="83860">
    <property type="hits" value="210 hits in 1180 CRISPR screens"/>
</dbReference>
<dbReference type="ChiTaRS" id="TAF3">
    <property type="organism name" value="human"/>
</dbReference>
<dbReference type="EvolutionaryTrace" id="Q5VWG9"/>
<dbReference type="GeneWiki" id="TAF3"/>
<dbReference type="GenomeRNAi" id="83860"/>
<dbReference type="Pharos" id="Q5VWG9">
    <property type="development level" value="Tbio"/>
</dbReference>
<dbReference type="PRO" id="PR:Q5VWG9"/>
<dbReference type="Proteomes" id="UP000005640">
    <property type="component" value="Chromosome 10"/>
</dbReference>
<dbReference type="RNAct" id="Q5VWG9">
    <property type="molecule type" value="protein"/>
</dbReference>
<dbReference type="Bgee" id="ENSG00000165632">
    <property type="expression patterns" value="Expressed in tendon of biceps brachii and 194 other cell types or tissues"/>
</dbReference>
<dbReference type="GO" id="GO:0001673">
    <property type="term" value="C:male germ cell nucleus"/>
    <property type="evidence" value="ECO:0007669"/>
    <property type="project" value="Ensembl"/>
</dbReference>
<dbReference type="GO" id="GO:0031965">
    <property type="term" value="C:nuclear membrane"/>
    <property type="evidence" value="ECO:0000314"/>
    <property type="project" value="HPA"/>
</dbReference>
<dbReference type="GO" id="GO:0005654">
    <property type="term" value="C:nucleoplasm"/>
    <property type="evidence" value="ECO:0000314"/>
    <property type="project" value="HPA"/>
</dbReference>
<dbReference type="GO" id="GO:0005634">
    <property type="term" value="C:nucleus"/>
    <property type="evidence" value="ECO:0000314"/>
    <property type="project" value="HGNC-UCL"/>
</dbReference>
<dbReference type="GO" id="GO:0005669">
    <property type="term" value="C:transcription factor TFIID complex"/>
    <property type="evidence" value="ECO:0000314"/>
    <property type="project" value="UniProtKB"/>
</dbReference>
<dbReference type="GO" id="GO:0140002">
    <property type="term" value="F:histone H3K4me3 reader activity"/>
    <property type="evidence" value="ECO:0000314"/>
    <property type="project" value="GO_Central"/>
</dbReference>
<dbReference type="GO" id="GO:0002039">
    <property type="term" value="F:p53 binding"/>
    <property type="evidence" value="ECO:0000318"/>
    <property type="project" value="GO_Central"/>
</dbReference>
<dbReference type="GO" id="GO:0046982">
    <property type="term" value="F:protein heterodimerization activity"/>
    <property type="evidence" value="ECO:0007669"/>
    <property type="project" value="InterPro"/>
</dbReference>
<dbReference type="GO" id="GO:0016251">
    <property type="term" value="F:RNA polymerase II general transcription initiation factor activity"/>
    <property type="evidence" value="ECO:0000305"/>
    <property type="project" value="ARUK-UCL"/>
</dbReference>
<dbReference type="GO" id="GO:0140416">
    <property type="term" value="F:transcription regulator inhibitor activity"/>
    <property type="evidence" value="ECO:0000314"/>
    <property type="project" value="BHF-UCL"/>
</dbReference>
<dbReference type="GO" id="GO:0008270">
    <property type="term" value="F:zinc ion binding"/>
    <property type="evidence" value="ECO:0007669"/>
    <property type="project" value="UniProtKB-KW"/>
</dbReference>
<dbReference type="GO" id="GO:0051457">
    <property type="term" value="P:maintenance of protein location in nucleus"/>
    <property type="evidence" value="ECO:0000314"/>
    <property type="project" value="HGNC-UCL"/>
</dbReference>
<dbReference type="GO" id="GO:0042789">
    <property type="term" value="P:mRNA transcription by RNA polymerase II"/>
    <property type="evidence" value="ECO:0000314"/>
    <property type="project" value="ComplexPortal"/>
</dbReference>
<dbReference type="GO" id="GO:1901797">
    <property type="term" value="P:negative regulation of signal transduction by p53 class mediator"/>
    <property type="evidence" value="ECO:0000314"/>
    <property type="project" value="BHF-UCL"/>
</dbReference>
<dbReference type="GO" id="GO:0000122">
    <property type="term" value="P:negative regulation of transcription by RNA polymerase II"/>
    <property type="evidence" value="ECO:0000314"/>
    <property type="project" value="BHF-UCL"/>
</dbReference>
<dbReference type="GO" id="GO:0045944">
    <property type="term" value="P:positive regulation of transcription by RNA polymerase II"/>
    <property type="evidence" value="ECO:0000318"/>
    <property type="project" value="GO_Central"/>
</dbReference>
<dbReference type="GO" id="GO:0060261">
    <property type="term" value="P:positive regulation of transcription initiation by RNA polymerase II"/>
    <property type="evidence" value="ECO:0000314"/>
    <property type="project" value="ComplexPortal"/>
</dbReference>
<dbReference type="GO" id="GO:0051123">
    <property type="term" value="P:RNA polymerase II preinitiation complex assembly"/>
    <property type="evidence" value="ECO:0000353"/>
    <property type="project" value="ComplexPortal"/>
</dbReference>
<dbReference type="CDD" id="cd22916">
    <property type="entry name" value="HFD_TAF3"/>
    <property type="match status" value="1"/>
</dbReference>
<dbReference type="CDD" id="cd15522">
    <property type="entry name" value="PHD_TAF3"/>
    <property type="match status" value="1"/>
</dbReference>
<dbReference type="FunFam" id="1.10.20.10:FF:000056">
    <property type="entry name" value="Transcription initiation factor TFIID subunit 3"/>
    <property type="match status" value="1"/>
</dbReference>
<dbReference type="FunFam" id="3.30.40.10:FF:000317">
    <property type="entry name" value="transcription initiation factor TFIID subunit 3"/>
    <property type="match status" value="1"/>
</dbReference>
<dbReference type="Gene3D" id="1.10.20.10">
    <property type="entry name" value="Histone, subunit A"/>
    <property type="match status" value="1"/>
</dbReference>
<dbReference type="Gene3D" id="3.30.40.10">
    <property type="entry name" value="Zinc/RING finger domain, C3HC4 (zinc finger)"/>
    <property type="match status" value="1"/>
</dbReference>
<dbReference type="InterPro" id="IPR006565">
    <property type="entry name" value="BTP"/>
</dbReference>
<dbReference type="InterPro" id="IPR009072">
    <property type="entry name" value="Histone-fold"/>
</dbReference>
<dbReference type="InterPro" id="IPR019786">
    <property type="entry name" value="Zinc_finger_PHD-type_CS"/>
</dbReference>
<dbReference type="InterPro" id="IPR011011">
    <property type="entry name" value="Znf_FYVE_PHD"/>
</dbReference>
<dbReference type="InterPro" id="IPR001965">
    <property type="entry name" value="Znf_PHD"/>
</dbReference>
<dbReference type="InterPro" id="IPR019787">
    <property type="entry name" value="Znf_PHD-finger"/>
</dbReference>
<dbReference type="InterPro" id="IPR013083">
    <property type="entry name" value="Znf_RING/FYVE/PHD"/>
</dbReference>
<dbReference type="PANTHER" id="PTHR46452">
    <property type="entry name" value="TRANSCRIPTION INITIATION FACTOR TFIID SUBUNIT 3"/>
    <property type="match status" value="1"/>
</dbReference>
<dbReference type="PANTHER" id="PTHR46452:SF1">
    <property type="entry name" value="TRANSCRIPTION INITIATION FACTOR TFIID SUBUNIT 3"/>
    <property type="match status" value="1"/>
</dbReference>
<dbReference type="Pfam" id="PF07524">
    <property type="entry name" value="Bromo_TP"/>
    <property type="match status" value="1"/>
</dbReference>
<dbReference type="Pfam" id="PF00628">
    <property type="entry name" value="PHD"/>
    <property type="match status" value="1"/>
</dbReference>
<dbReference type="SMART" id="SM00576">
    <property type="entry name" value="BTP"/>
    <property type="match status" value="1"/>
</dbReference>
<dbReference type="SMART" id="SM00249">
    <property type="entry name" value="PHD"/>
    <property type="match status" value="1"/>
</dbReference>
<dbReference type="SUPFAM" id="SSF57903">
    <property type="entry name" value="FYVE/PHD zinc finger"/>
    <property type="match status" value="1"/>
</dbReference>
<dbReference type="PROSITE" id="PS01359">
    <property type="entry name" value="ZF_PHD_1"/>
    <property type="match status" value="1"/>
</dbReference>
<dbReference type="PROSITE" id="PS50016">
    <property type="entry name" value="ZF_PHD_2"/>
    <property type="match status" value="1"/>
</dbReference>
<keyword id="KW-0002">3D-structure</keyword>
<keyword id="KW-0007">Acetylation</keyword>
<keyword id="KW-1017">Isopeptide bond</keyword>
<keyword id="KW-0479">Metal-binding</keyword>
<keyword id="KW-0539">Nucleus</keyword>
<keyword id="KW-0597">Phosphoprotein</keyword>
<keyword id="KW-1267">Proteomics identification</keyword>
<keyword id="KW-1185">Reference proteome</keyword>
<keyword id="KW-0804">Transcription</keyword>
<keyword id="KW-0805">Transcription regulation</keyword>
<keyword id="KW-0832">Ubl conjugation</keyword>
<keyword id="KW-0862">Zinc</keyword>
<keyword id="KW-0863">Zinc-finger</keyword>
<gene>
    <name type="primary">TAF3</name>
</gene>
<accession>Q5VWG9</accession>
<accession>Q05DA0</accession>
<accession>Q6GMS5</accession>
<accession>Q6P6B5</accession>
<accession>Q86VY6</accession>
<accession>Q9BQS9</accession>
<accession>Q9UFI8</accession>
<evidence type="ECO:0000250" key="1">
    <source>
        <dbReference type="UniProtKB" id="Q5HZG4"/>
    </source>
</evidence>
<evidence type="ECO:0000255" key="2">
    <source>
        <dbReference type="PROSITE-ProRule" id="PRU00146"/>
    </source>
</evidence>
<evidence type="ECO:0000256" key="3">
    <source>
        <dbReference type="SAM" id="MobiDB-lite"/>
    </source>
</evidence>
<evidence type="ECO:0000269" key="4">
    <source>
    </source>
</evidence>
<evidence type="ECO:0000269" key="5">
    <source>
    </source>
</evidence>
<evidence type="ECO:0000269" key="6">
    <source>
    </source>
</evidence>
<evidence type="ECO:0000269" key="7">
    <source>
    </source>
</evidence>
<evidence type="ECO:0000305" key="8"/>
<evidence type="ECO:0007744" key="9">
    <source>
        <dbReference type="PDB" id="5C13"/>
    </source>
</evidence>
<evidence type="ECO:0007744" key="10">
    <source>
        <dbReference type="PDB" id="5XMY"/>
    </source>
</evidence>
<evidence type="ECO:0007744" key="11">
    <source>
        <dbReference type="PDB" id="7EDX"/>
    </source>
</evidence>
<evidence type="ECO:0007744" key="12">
    <source>
        <dbReference type="PDB" id="7EG7"/>
    </source>
</evidence>
<evidence type="ECO:0007744" key="13">
    <source>
        <dbReference type="PDB" id="7EG8"/>
    </source>
</evidence>
<evidence type="ECO:0007744" key="14">
    <source>
        <dbReference type="PDB" id="7EG9"/>
    </source>
</evidence>
<evidence type="ECO:0007744" key="15">
    <source>
        <dbReference type="PDB" id="7EGA"/>
    </source>
</evidence>
<evidence type="ECO:0007744" key="16">
    <source>
        <dbReference type="PDB" id="7EGB"/>
    </source>
</evidence>
<evidence type="ECO:0007744" key="17">
    <source>
        <dbReference type="PDB" id="7EGC"/>
    </source>
</evidence>
<evidence type="ECO:0007744" key="18">
    <source>
        <dbReference type="PDB" id="7EGD"/>
    </source>
</evidence>
<evidence type="ECO:0007744" key="19">
    <source>
        <dbReference type="PDB" id="7EGE"/>
    </source>
</evidence>
<evidence type="ECO:0007744" key="20">
    <source>
        <dbReference type="PDB" id="7EGF"/>
    </source>
</evidence>
<evidence type="ECO:0007744" key="21">
    <source>
    </source>
</evidence>
<evidence type="ECO:0007744" key="22">
    <source>
    </source>
</evidence>
<evidence type="ECO:0007744" key="23">
    <source>
    </source>
</evidence>
<evidence type="ECO:0007744" key="24">
    <source>
    </source>
</evidence>
<evidence type="ECO:0007744" key="25">
    <source>
    </source>
</evidence>
<evidence type="ECO:0007744" key="26">
    <source>
    </source>
</evidence>
<evidence type="ECO:0007744" key="27">
    <source>
    </source>
</evidence>
<evidence type="ECO:0007744" key="28">
    <source>
    </source>
</evidence>
<evidence type="ECO:0007829" key="29">
    <source>
        <dbReference type="PDB" id="5WXH"/>
    </source>
</evidence>
<evidence type="ECO:0007829" key="30">
    <source>
        <dbReference type="PDB" id="7EGF"/>
    </source>
</evidence>
<comment type="function">
    <text evidence="4 7">The TFIID basal transcription factor complex plays a major role in the initiation of RNA polymerase II (Pol II)-dependent transcription (PubMed:33795473). TFIID recognizes and binds promoters with or without a TATA box via its subunit TBP, a TATA-box-binding protein, and promotes assembly of the pre-initiation complex (PIC) (PubMed:33795473). The TFIID complex consists of TBP and TBP-associated factors (TAFs), including TAF1, TAF2, TAF3, TAF4, TAF5, TAF6, TAF7, TAF8, TAF9, TAF10, TAF11, TAF12 and TAF13 (PubMed:33795473). The TFIID complex structure can be divided into 3 modules TFIID-A, TFIID-B, and TFIID-C (PubMed:33795473). TAF3 forms the TFIID-A module together with TAF5 and TBP (PubMed:33795473). Required in complex with TBPL2 for the differentiation of myoblasts into myocytes (PubMed:11438666). The TAF3-TBPL2 complex replaces TFIID at specific promoters at an early stage in the differentiation process (PubMed:11438666).</text>
</comment>
<comment type="subunit">
    <text evidence="4 7">Component of the TFIID basal transcription factor complex, composed of TATA-box-binding protein TBP, and a number of TBP-associated factors (TAFs), including TAF1, TAF2, TAF3, TAF4, TAF5, TAF6, TAF7, TAF8, TAF9, TAF10, TAF11, TAF12 and TAF13 (PubMed:33795473). Interacts with TAF10 via the histone fold (PubMed:11438666). Interacts with TAF13, TBP, SAP130 and GCN5L2 (PubMed:11438666). Interacts with TBPL2 (PubMed:11438666).</text>
</comment>
<comment type="interaction">
    <interactant intactId="EBI-1560087">
        <id>Q5VWG9</id>
    </interactant>
    <interactant intactId="EBI-120658">
        <id>P84243</id>
        <label>H3-3B</label>
    </interactant>
    <organismsDiffer>false</organismsDiffer>
    <experiments>3</experiments>
</comment>
<comment type="interaction">
    <interactant intactId="EBI-1560087">
        <id>Q5VWG9</id>
    </interactant>
    <interactant intactId="EBI-1560145">
        <id>Q15542</id>
        <label>TAF5</label>
    </interactant>
    <organismsDiffer>false</organismsDiffer>
    <experiments>2</experiments>
</comment>
<comment type="subcellular location">
    <subcellularLocation>
        <location evidence="4">Nucleus</location>
    </subcellularLocation>
</comment>
<comment type="domain">
    <text evidence="1">The PHD-type zinc finger mediates binding to histone H3 methyllysine at position 4 (H3K4me3).</text>
</comment>
<comment type="similarity">
    <text evidence="8">Belongs to the TAF3 family.</text>
</comment>
<comment type="sequence caution" evidence="8">
    <conflict type="miscellaneous discrepancy">
        <sequence resource="EMBL-CDS" id="AAH45106"/>
    </conflict>
    <text>Contaminating sequence. Potential poly-A sequence.</text>
</comment>
<comment type="sequence caution" evidence="8">
    <conflict type="erroneous initiation">
        <sequence resource="EMBL-CDS" id="AAH62352"/>
    </conflict>
</comment>
<comment type="sequence caution" evidence="8">
    <conflict type="erroneous initiation">
        <sequence resource="EMBL-CDS" id="AAH73884"/>
    </conflict>
</comment>
<sequence length="929" mass="103582">MCESYSRSLLRVSVAQICQALGWDSVQLSACHLLTDVLQRYLQQLGRGCHRYSELYGRTDPILDDVGEAFQLMGVSLHELEDYIHNIEPVTFPHQIPSFPVSKNNVLQFPQPGSKDAEERKEYIPDYLPPIVSSQEEEEEEQVPTDGGTSAEAMQVPLEEDDELEEEEIINDENFLGKRPLDSPEAEELPAMKRPRLLSTKGDTLDVVLLEAREPLSSINTQKIPPMLSPVHVQDSTDLAPPSPEPPMLAPVAKSQMPTAKPLETKSFTPKTKTKTSSPGQKTKSPKTAQSPAMVGSPIRSPKTVSKEKKSPGRSKSPKSPKSPKVTTHIPQTPVRPETPNRTPSATLSEKISKETIQVKQIQTPPDAGKLNSENQPKKAVVADKTIEASIDAVIARACAEREPDPFEFSSGSESEGDIFTSPKRISGPECTTPKASTSANNFTKSGSTPLPLSGGTSSSDNSWTMDASIDEVVRKAKLGTPSNMPPNFPYISSPSVSPPTPEPLHKVYEEKTKLPSSVEVKKKLKKELKTKMKKKEKQRDREREKDKNKDKSKEKDKVKEKEKDKETGRETKYPWKEFLKEEEADPYKFKIKEFEDVDPKVKLKDGLVRKEKEKHKDKKKDREKGKKDKDKREKEKVKDKGREDKMKAPAPPLVLPPKELALPLFSPATASRVPAMLPSLLPVLPEKLFEEKEKVKEKEKKKDKKEKKKKKEKEKEKKEKEREKEKREREKREKEKEKHKHEKIKVEPVALAPSPVIPRLTLRVGAGQDKIVISKVVPAPEAKPAPSQNRPKTPPPAPAPAPGPMLVSPAPVPLPLLAQAAAGPALLPSPGPAASGASAKAPVRSVVTETVSTYVIRDEWGNQIWICPGCNKPDDGSPMIGCDDCDDWYHWPCVGIMTAPPEEMQWFCPKCANKKKDKKHKKRKHRAH</sequence>
<name>TAF3_HUMAN</name>
<proteinExistence type="evidence at protein level"/>
<organism>
    <name type="scientific">Homo sapiens</name>
    <name type="common">Human</name>
    <dbReference type="NCBI Taxonomy" id="9606"/>
    <lineage>
        <taxon>Eukaryota</taxon>
        <taxon>Metazoa</taxon>
        <taxon>Chordata</taxon>
        <taxon>Craniata</taxon>
        <taxon>Vertebrata</taxon>
        <taxon>Euteleostomi</taxon>
        <taxon>Mammalia</taxon>
        <taxon>Eutheria</taxon>
        <taxon>Euarchontoglires</taxon>
        <taxon>Primates</taxon>
        <taxon>Haplorrhini</taxon>
        <taxon>Catarrhini</taxon>
        <taxon>Hominidae</taxon>
        <taxon>Homo</taxon>
    </lineage>
</organism>
<protein>
    <recommendedName>
        <fullName>Transcription initiation factor TFIID subunit 3</fullName>
    </recommendedName>
    <alternativeName>
        <fullName>140 kDa TATA box-binding protein-associated factor</fullName>
    </alternativeName>
    <alternativeName>
        <fullName>TBP-associated factor 3</fullName>
    </alternativeName>
    <alternativeName>
        <fullName>Transcription initiation factor TFIID 140 kDa subunit</fullName>
        <shortName>TAF(II)140</shortName>
        <shortName>TAF140</shortName>
        <shortName>TAFII-140</shortName>
        <shortName>TAFII140</shortName>
    </alternativeName>
</protein>
<feature type="chain" id="PRO_0000245528" description="Transcription initiation factor TFIID subunit 3">
    <location>
        <begin position="1"/>
        <end position="929"/>
    </location>
</feature>
<feature type="zinc finger region" description="PHD-type" evidence="2">
    <location>
        <begin position="865"/>
        <end position="915"/>
    </location>
</feature>
<feature type="region of interest" description="Disordered" evidence="3">
    <location>
        <begin position="131"/>
        <end position="152"/>
    </location>
</feature>
<feature type="region of interest" description="Disordered" evidence="3">
    <location>
        <begin position="176"/>
        <end position="197"/>
    </location>
</feature>
<feature type="region of interest" description="Disordered" evidence="3">
    <location>
        <begin position="221"/>
        <end position="358"/>
    </location>
</feature>
<feature type="region of interest" description="Disordered" evidence="3">
    <location>
        <begin position="405"/>
        <end position="578"/>
    </location>
</feature>
<feature type="region of interest" description="Disordered" evidence="3">
    <location>
        <begin position="603"/>
        <end position="658"/>
    </location>
</feature>
<feature type="region of interest" description="Disordered" evidence="3">
    <location>
        <begin position="692"/>
        <end position="748"/>
    </location>
</feature>
<feature type="region of interest" description="Disordered" evidence="3">
    <location>
        <begin position="778"/>
        <end position="807"/>
    </location>
</feature>
<feature type="compositionally biased region" description="Low complexity" evidence="3">
    <location>
        <begin position="265"/>
        <end position="288"/>
    </location>
</feature>
<feature type="compositionally biased region" description="Polar residues" evidence="3">
    <location>
        <begin position="340"/>
        <end position="358"/>
    </location>
</feature>
<feature type="compositionally biased region" description="Polar residues" evidence="3">
    <location>
        <begin position="434"/>
        <end position="466"/>
    </location>
</feature>
<feature type="compositionally biased region" description="Basic and acidic residues" evidence="3">
    <location>
        <begin position="504"/>
        <end position="514"/>
    </location>
</feature>
<feature type="compositionally biased region" description="Basic residues" evidence="3">
    <location>
        <begin position="523"/>
        <end position="537"/>
    </location>
</feature>
<feature type="compositionally biased region" description="Basic and acidic residues" evidence="3">
    <location>
        <begin position="538"/>
        <end position="578"/>
    </location>
</feature>
<feature type="compositionally biased region" description="Basic and acidic residues" evidence="3">
    <location>
        <begin position="603"/>
        <end position="612"/>
    </location>
</feature>
<feature type="compositionally biased region" description="Basic and acidic residues" evidence="3">
    <location>
        <begin position="621"/>
        <end position="648"/>
    </location>
</feature>
<feature type="compositionally biased region" description="Basic and acidic residues" evidence="3">
    <location>
        <begin position="692"/>
        <end position="701"/>
    </location>
</feature>
<feature type="compositionally biased region" description="Basic residues" evidence="3">
    <location>
        <begin position="702"/>
        <end position="713"/>
    </location>
</feature>
<feature type="compositionally biased region" description="Basic and acidic residues" evidence="3">
    <location>
        <begin position="714"/>
        <end position="737"/>
    </location>
</feature>
<feature type="compositionally biased region" description="Low complexity" evidence="3">
    <location>
        <begin position="778"/>
        <end position="787"/>
    </location>
</feature>
<feature type="compositionally biased region" description="Pro residues" evidence="3">
    <location>
        <begin position="793"/>
        <end position="804"/>
    </location>
</feature>
<feature type="binding site" evidence="9">
    <location>
        <position position="868"/>
    </location>
    <ligand>
        <name>Zn(2+)</name>
        <dbReference type="ChEBI" id="CHEBI:29105"/>
        <label>1</label>
    </ligand>
</feature>
<feature type="binding site" evidence="9">
    <location>
        <position position="871"/>
    </location>
    <ligand>
        <name>Zn(2+)</name>
        <dbReference type="ChEBI" id="CHEBI:29105"/>
        <label>1</label>
    </ligand>
</feature>
<feature type="binding site" evidence="9">
    <location>
        <position position="883"/>
    </location>
    <ligand>
        <name>Zn(2+)</name>
        <dbReference type="ChEBI" id="CHEBI:29105"/>
        <label>2</label>
    </ligand>
</feature>
<feature type="binding site" evidence="9">
    <location>
        <position position="886"/>
    </location>
    <ligand>
        <name>Zn(2+)</name>
        <dbReference type="ChEBI" id="CHEBI:29105"/>
        <label>2</label>
    </ligand>
</feature>
<feature type="binding site" evidence="9">
    <location>
        <position position="891"/>
    </location>
    <ligand>
        <name>Zn(2+)</name>
        <dbReference type="ChEBI" id="CHEBI:29105"/>
        <label>1</label>
    </ligand>
</feature>
<feature type="binding site" evidence="9">
    <location>
        <position position="894"/>
    </location>
    <ligand>
        <name>Zn(2+)</name>
        <dbReference type="ChEBI" id="CHEBI:29105"/>
        <label>1</label>
    </ligand>
</feature>
<feature type="binding site" evidence="9">
    <location>
        <position position="909"/>
    </location>
    <ligand>
        <name>Zn(2+)</name>
        <dbReference type="ChEBI" id="CHEBI:29105"/>
        <label>2</label>
    </ligand>
</feature>
<feature type="binding site" evidence="9">
    <location>
        <position position="912"/>
    </location>
    <ligand>
        <name>Zn(2+)</name>
        <dbReference type="ChEBI" id="CHEBI:29105"/>
        <label>2</label>
    </ligand>
</feature>
<feature type="modified residue" description="Phosphoserine" evidence="21 23 24 25 26">
    <location>
        <position position="183"/>
    </location>
</feature>
<feature type="modified residue" description="Phosphoserine" evidence="25">
    <location>
        <position position="199"/>
    </location>
</feature>
<feature type="modified residue" description="Phosphoserine" evidence="23">
    <location>
        <position position="229"/>
    </location>
</feature>
<feature type="modified residue" description="Phosphoserine" evidence="23">
    <location>
        <position position="243"/>
    </location>
</feature>
<feature type="modified residue" description="N6-acetyllysine" evidence="22">
    <location>
        <position position="266"/>
    </location>
</feature>
<feature type="modified residue" description="Phosphoserine" evidence="25 26">
    <location>
        <position position="291"/>
    </location>
</feature>
<feature type="modified residue" description="Phosphoserine" evidence="23 25">
    <location>
        <position position="297"/>
    </location>
</feature>
<feature type="modified residue" description="Phosphoserine" evidence="23 25">
    <location>
        <position position="301"/>
    </location>
</feature>
<feature type="modified residue" description="Phosphothreonine" evidence="23">
    <location>
        <position position="501"/>
    </location>
</feature>
<feature type="modified residue" description="Phosphoserine" evidence="25">
    <location>
        <position position="667"/>
    </location>
</feature>
<feature type="modified residue" description="Phosphoserine" evidence="25">
    <location>
        <position position="755"/>
    </location>
</feature>
<feature type="modified residue" description="N6-acetyllysine" evidence="22">
    <location>
        <position position="776"/>
    </location>
</feature>
<feature type="cross-link" description="Glycyl lysine isopeptide (Lys-Gly) (interchain with G-Cter in SUMO2)" evidence="28">
    <location>
        <position position="581"/>
    </location>
</feature>
<feature type="cross-link" description="Glycyl lysine isopeptide (Lys-Gly) (interchain with G-Cter in SUMO2)" evidence="27 28">
    <location>
        <position position="746"/>
    </location>
</feature>
<feature type="sequence variant" id="VAR_052254" description="In dbSNP:rs17366712.">
    <original>S</original>
    <variation>T</variation>
    <location>
        <position position="349"/>
    </location>
</feature>
<feature type="sequence variant" id="VAR_052255" description="In dbSNP:rs4747647." evidence="5">
    <original>N</original>
    <variation>S</variation>
    <location>
        <position position="442"/>
    </location>
</feature>
<feature type="sequence variant" id="VAR_052256" description="In dbSNP:rs1244229." evidence="6">
    <original>V</original>
    <variation>A</variation>
    <location>
        <position position="696"/>
    </location>
</feature>
<feature type="sequence variant" id="VAR_052257" description="In dbSNP:rs10795583.">
    <original>V</original>
    <variation>L</variation>
    <location>
        <position position="696"/>
    </location>
</feature>
<feature type="mutagenesis site" description="Loss of interaction with TAF10." evidence="4">
    <original>W</original>
    <variation>R</variation>
    <location>
        <position position="23"/>
    </location>
</feature>
<feature type="sequence conflict" description="In Ref. 4; CAB56032." evidence="8" ref="4">
    <original>WDS</original>
    <variation>TRP</variation>
    <location>
        <begin position="23"/>
        <end position="25"/>
    </location>
</feature>
<feature type="sequence conflict" description="In Ref. 3; AAH73884." evidence="8" ref="3">
    <original>M</original>
    <variation>K</variation>
    <location>
        <position position="533"/>
    </location>
</feature>
<feature type="sequence conflict" description="In Ref. 3; AAH17320." evidence="8" ref="3">
    <original>EKQ</original>
    <variation>KKK</variation>
    <location>
        <begin position="537"/>
        <end position="539"/>
    </location>
</feature>
<feature type="sequence conflict" description="In Ref. 3; AAH62352." evidence="8" ref="3">
    <original>V</original>
    <variation>P</variation>
    <location>
        <position position="696"/>
    </location>
</feature>
<feature type="sequence conflict" description="In Ref. 4; CAB56032." evidence="8" ref="4">
    <original>E</original>
    <variation>K</variation>
    <location>
        <position position="700"/>
    </location>
</feature>
<feature type="sequence conflict" description="In Ref. 3; AAH62352." evidence="8" ref="3">
    <original>E</original>
    <variation>K</variation>
    <location>
        <position position="707"/>
    </location>
</feature>
<feature type="sequence conflict" description="In Ref. 3; AAH62352." evidence="8" ref="3">
    <original>E</original>
    <variation>K</variation>
    <location>
        <position position="713"/>
    </location>
</feature>
<feature type="helix" evidence="30">
    <location>
        <begin position="2"/>
        <end position="15"/>
    </location>
</feature>
<feature type="helix" evidence="30">
    <location>
        <begin position="17"/>
        <end position="20"/>
    </location>
</feature>
<feature type="strand" evidence="30">
    <location>
        <begin position="25"/>
        <end position="27"/>
    </location>
</feature>
<feature type="helix" evidence="30">
    <location>
        <begin position="28"/>
        <end position="55"/>
    </location>
</feature>
<feature type="helix" evidence="30">
    <location>
        <begin position="63"/>
        <end position="73"/>
    </location>
</feature>
<feature type="helix" evidence="30">
    <location>
        <begin position="77"/>
        <end position="86"/>
    </location>
</feature>
<feature type="strand" evidence="30">
    <location>
        <begin position="99"/>
        <end position="101"/>
    </location>
</feature>
<feature type="strand" evidence="29">
    <location>
        <begin position="856"/>
        <end position="858"/>
    </location>
</feature>
<feature type="strand" evidence="29">
    <location>
        <begin position="864"/>
        <end position="867"/>
    </location>
</feature>
<feature type="turn" evidence="29">
    <location>
        <begin position="869"/>
        <end position="871"/>
    </location>
</feature>
<feature type="strand" evidence="29">
    <location>
        <begin position="880"/>
        <end position="882"/>
    </location>
</feature>
<feature type="turn" evidence="29">
    <location>
        <begin position="884"/>
        <end position="886"/>
    </location>
</feature>
<feature type="strand" evidence="29">
    <location>
        <begin position="889"/>
        <end position="891"/>
    </location>
</feature>
<feature type="helix" evidence="29">
    <location>
        <begin position="892"/>
        <end position="895"/>
    </location>
</feature>
<feature type="helix" evidence="29">
    <location>
        <begin position="910"/>
        <end position="913"/>
    </location>
</feature>